<organism>
    <name type="scientific">Rhizobium meliloti (strain 1021)</name>
    <name type="common">Ensifer meliloti</name>
    <name type="synonym">Sinorhizobium meliloti</name>
    <dbReference type="NCBI Taxonomy" id="266834"/>
    <lineage>
        <taxon>Bacteria</taxon>
        <taxon>Pseudomonadati</taxon>
        <taxon>Pseudomonadota</taxon>
        <taxon>Alphaproteobacteria</taxon>
        <taxon>Hyphomicrobiales</taxon>
        <taxon>Rhizobiaceae</taxon>
        <taxon>Sinorhizobium/Ensifer group</taxon>
        <taxon>Sinorhizobium</taxon>
    </lineage>
</organism>
<reference key="1">
    <citation type="journal article" date="2001" name="Proc. Natl. Acad. Sci. U.S.A.">
        <title>Analysis of the chromosome sequence of the legume symbiont Sinorhizobium meliloti strain 1021.</title>
        <authorList>
            <person name="Capela D."/>
            <person name="Barloy-Hubler F."/>
            <person name="Gouzy J."/>
            <person name="Bothe G."/>
            <person name="Ampe F."/>
            <person name="Batut J."/>
            <person name="Boistard P."/>
            <person name="Becker A."/>
            <person name="Boutry M."/>
            <person name="Cadieu E."/>
            <person name="Dreano S."/>
            <person name="Gloux S."/>
            <person name="Godrie T."/>
            <person name="Goffeau A."/>
            <person name="Kahn D."/>
            <person name="Kiss E."/>
            <person name="Lelaure V."/>
            <person name="Masuy D."/>
            <person name="Pohl T."/>
            <person name="Portetelle D."/>
            <person name="Puehler A."/>
            <person name="Purnelle B."/>
            <person name="Ramsperger U."/>
            <person name="Renard C."/>
            <person name="Thebault P."/>
            <person name="Vandenbol M."/>
            <person name="Weidner S."/>
            <person name="Galibert F."/>
        </authorList>
    </citation>
    <scope>NUCLEOTIDE SEQUENCE [LARGE SCALE GENOMIC DNA]</scope>
    <source>
        <strain>1021</strain>
    </source>
</reference>
<reference key="2">
    <citation type="journal article" date="2001" name="Science">
        <title>The composite genome of the legume symbiont Sinorhizobium meliloti.</title>
        <authorList>
            <person name="Galibert F."/>
            <person name="Finan T.M."/>
            <person name="Long S.R."/>
            <person name="Puehler A."/>
            <person name="Abola P."/>
            <person name="Ampe F."/>
            <person name="Barloy-Hubler F."/>
            <person name="Barnett M.J."/>
            <person name="Becker A."/>
            <person name="Boistard P."/>
            <person name="Bothe G."/>
            <person name="Boutry M."/>
            <person name="Bowser L."/>
            <person name="Buhrmester J."/>
            <person name="Cadieu E."/>
            <person name="Capela D."/>
            <person name="Chain P."/>
            <person name="Cowie A."/>
            <person name="Davis R.W."/>
            <person name="Dreano S."/>
            <person name="Federspiel N.A."/>
            <person name="Fisher R.F."/>
            <person name="Gloux S."/>
            <person name="Godrie T."/>
            <person name="Goffeau A."/>
            <person name="Golding B."/>
            <person name="Gouzy J."/>
            <person name="Gurjal M."/>
            <person name="Hernandez-Lucas I."/>
            <person name="Hong A."/>
            <person name="Huizar L."/>
            <person name="Hyman R.W."/>
            <person name="Jones T."/>
            <person name="Kahn D."/>
            <person name="Kahn M.L."/>
            <person name="Kalman S."/>
            <person name="Keating D.H."/>
            <person name="Kiss E."/>
            <person name="Komp C."/>
            <person name="Lelaure V."/>
            <person name="Masuy D."/>
            <person name="Palm C."/>
            <person name="Peck M.C."/>
            <person name="Pohl T.M."/>
            <person name="Portetelle D."/>
            <person name="Purnelle B."/>
            <person name="Ramsperger U."/>
            <person name="Surzycki R."/>
            <person name="Thebault P."/>
            <person name="Vandenbol M."/>
            <person name="Vorhoelter F.J."/>
            <person name="Weidner S."/>
            <person name="Wells D.H."/>
            <person name="Wong K."/>
            <person name="Yeh K.-C."/>
            <person name="Batut J."/>
        </authorList>
    </citation>
    <scope>NUCLEOTIDE SEQUENCE [LARGE SCALE GENOMIC DNA]</scope>
    <source>
        <strain>1021</strain>
    </source>
</reference>
<accession>Q92QH0</accession>
<proteinExistence type="inferred from homology"/>
<keyword id="KW-0488">Methylation</keyword>
<keyword id="KW-1185">Reference proteome</keyword>
<keyword id="KW-0687">Ribonucleoprotein</keyword>
<keyword id="KW-0689">Ribosomal protein</keyword>
<keyword id="KW-0694">RNA-binding</keyword>
<keyword id="KW-0699">rRNA-binding</keyword>
<gene>
    <name evidence="1" type="primary">rplC</name>
    <name type="ordered locus">R01356</name>
    <name type="ORF">SMc01309</name>
</gene>
<name>RL3_RHIME</name>
<feature type="chain" id="PRO_0000077143" description="Large ribosomal subunit protein uL3">
    <location>
        <begin position="1"/>
        <end position="228"/>
    </location>
</feature>
<feature type="modified residue" description="N5-methylglutamine" evidence="1">
    <location>
        <position position="151"/>
    </location>
</feature>
<dbReference type="EMBL" id="AL591688">
    <property type="protein sequence ID" value="CAC45935.1"/>
    <property type="molecule type" value="Genomic_DNA"/>
</dbReference>
<dbReference type="RefSeq" id="NP_385462.1">
    <property type="nucleotide sequence ID" value="NC_003047.1"/>
</dbReference>
<dbReference type="RefSeq" id="WP_010969195.1">
    <property type="nucleotide sequence ID" value="NC_003047.1"/>
</dbReference>
<dbReference type="SMR" id="Q92QH0"/>
<dbReference type="EnsemblBacteria" id="CAC45935">
    <property type="protein sequence ID" value="CAC45935"/>
    <property type="gene ID" value="SMc01309"/>
</dbReference>
<dbReference type="GeneID" id="89575680"/>
<dbReference type="KEGG" id="sme:SMc01309"/>
<dbReference type="PATRIC" id="fig|266834.11.peg.2772"/>
<dbReference type="eggNOG" id="COG0087">
    <property type="taxonomic scope" value="Bacteria"/>
</dbReference>
<dbReference type="HOGENOM" id="CLU_044142_2_0_5"/>
<dbReference type="OrthoDB" id="9806135at2"/>
<dbReference type="Proteomes" id="UP000001976">
    <property type="component" value="Chromosome"/>
</dbReference>
<dbReference type="GO" id="GO:0022625">
    <property type="term" value="C:cytosolic large ribosomal subunit"/>
    <property type="evidence" value="ECO:0007669"/>
    <property type="project" value="TreeGrafter"/>
</dbReference>
<dbReference type="GO" id="GO:0019843">
    <property type="term" value="F:rRNA binding"/>
    <property type="evidence" value="ECO:0007669"/>
    <property type="project" value="UniProtKB-UniRule"/>
</dbReference>
<dbReference type="GO" id="GO:0003735">
    <property type="term" value="F:structural constituent of ribosome"/>
    <property type="evidence" value="ECO:0007669"/>
    <property type="project" value="InterPro"/>
</dbReference>
<dbReference type="GO" id="GO:0006412">
    <property type="term" value="P:translation"/>
    <property type="evidence" value="ECO:0007669"/>
    <property type="project" value="UniProtKB-UniRule"/>
</dbReference>
<dbReference type="FunFam" id="2.40.30.10:FF:000004">
    <property type="entry name" value="50S ribosomal protein L3"/>
    <property type="match status" value="1"/>
</dbReference>
<dbReference type="FunFam" id="3.30.160.810:FF:000001">
    <property type="entry name" value="50S ribosomal protein L3"/>
    <property type="match status" value="1"/>
</dbReference>
<dbReference type="Gene3D" id="3.30.160.810">
    <property type="match status" value="1"/>
</dbReference>
<dbReference type="Gene3D" id="2.40.30.10">
    <property type="entry name" value="Translation factors"/>
    <property type="match status" value="1"/>
</dbReference>
<dbReference type="HAMAP" id="MF_01325_B">
    <property type="entry name" value="Ribosomal_uL3_B"/>
    <property type="match status" value="1"/>
</dbReference>
<dbReference type="InterPro" id="IPR000597">
    <property type="entry name" value="Ribosomal_uL3"/>
</dbReference>
<dbReference type="InterPro" id="IPR019927">
    <property type="entry name" value="Ribosomal_uL3_bac/org-type"/>
</dbReference>
<dbReference type="InterPro" id="IPR019926">
    <property type="entry name" value="Ribosomal_uL3_CS"/>
</dbReference>
<dbReference type="InterPro" id="IPR009000">
    <property type="entry name" value="Transl_B-barrel_sf"/>
</dbReference>
<dbReference type="NCBIfam" id="TIGR03625">
    <property type="entry name" value="L3_bact"/>
    <property type="match status" value="1"/>
</dbReference>
<dbReference type="PANTHER" id="PTHR11229">
    <property type="entry name" value="50S RIBOSOMAL PROTEIN L3"/>
    <property type="match status" value="1"/>
</dbReference>
<dbReference type="PANTHER" id="PTHR11229:SF16">
    <property type="entry name" value="LARGE RIBOSOMAL SUBUNIT PROTEIN UL3C"/>
    <property type="match status" value="1"/>
</dbReference>
<dbReference type="Pfam" id="PF00297">
    <property type="entry name" value="Ribosomal_L3"/>
    <property type="match status" value="1"/>
</dbReference>
<dbReference type="SUPFAM" id="SSF50447">
    <property type="entry name" value="Translation proteins"/>
    <property type="match status" value="1"/>
</dbReference>
<dbReference type="PROSITE" id="PS00474">
    <property type="entry name" value="RIBOSOMAL_L3"/>
    <property type="match status" value="1"/>
</dbReference>
<sequence length="228" mass="24076">MRSGVIAQKVGMTRVYNDAGEHIPVTVLRLENCQVVSHRTEEKNGYTAVQLGAGRSKVKNTPKAMRGHFAAASVEPKAKLVEFRVSADNLIDIGAELTAGHFVAGQLVDVTGTTIGKGFAGAIKRHNFGGLRATHGVSVSHRSHGSTGSNQDPGRVWKGKRMAGHMGQTRVTTQNLEVVSTDEDRGLILVKGAVPGSKGSWIVVRDAIKSGTPEGAPRPAAVRAAESK</sequence>
<evidence type="ECO:0000255" key="1">
    <source>
        <dbReference type="HAMAP-Rule" id="MF_01325"/>
    </source>
</evidence>
<evidence type="ECO:0000305" key="2"/>
<protein>
    <recommendedName>
        <fullName evidence="1">Large ribosomal subunit protein uL3</fullName>
    </recommendedName>
    <alternativeName>
        <fullName evidence="2">50S ribosomal protein L3</fullName>
    </alternativeName>
</protein>
<comment type="function">
    <text evidence="1">One of the primary rRNA binding proteins, it binds directly near the 3'-end of the 23S rRNA, where it nucleates assembly of the 50S subunit.</text>
</comment>
<comment type="subunit">
    <text evidence="1">Part of the 50S ribosomal subunit. Forms a cluster with proteins L14 and L19.</text>
</comment>
<comment type="PTM">
    <text evidence="1">Methylated by PrmB.</text>
</comment>
<comment type="similarity">
    <text evidence="1">Belongs to the universal ribosomal protein uL3 family.</text>
</comment>